<comment type="function">
    <text evidence="2 4">Membrane-anchoring subunit of succinate dehydrogenase (SDH) that is involved in complex II of the mitochondrial electron transport chain and is responsible for transferring electrons from succinate to ubiquinone (coenzyme Q) (PubMed:15989954). SDH also oxidizes malate to the non-canonical enol form of oxaloacetate, enol-oxaloacetate (By similarity). Enol-oxaloacetate, which is a potent inhibitor of the succinate dehydrogenase activity, is further isomerized into keto-oxaloacetate (By similarity).</text>
</comment>
<comment type="pathway">
    <text evidence="4">Carbohydrate metabolism; tricarboxylic acid cycle.</text>
</comment>
<comment type="subunit">
    <text evidence="4">Component of complex II composed of four subunits: the flavoprotein (FP) SDHA, iron-sulfur protein (IP) SDHB, and a cytochrome b560 composed of SDHC and SDHD.</text>
</comment>
<comment type="subcellular location">
    <subcellularLocation>
        <location evidence="1">Mitochondrion inner membrane</location>
        <topology evidence="3">Multi-pass membrane protein</topology>
    </subcellularLocation>
</comment>
<comment type="similarity">
    <text evidence="5">Belongs to the CybS family.</text>
</comment>
<protein>
    <recommendedName>
        <fullName>Succinate dehydrogenase [ubiquinone] cytochrome b small subunit, mitochondrial</fullName>
        <shortName>CybS</shortName>
    </recommendedName>
    <alternativeName>
        <fullName>CII-4</fullName>
    </alternativeName>
    <alternativeName>
        <fullName>Malate dehydrogenase [quinone] cytochrome b small subunit</fullName>
    </alternativeName>
    <alternativeName>
        <fullName>QPs3</fullName>
    </alternativeName>
    <alternativeName>
        <fullName>Succinate dehydrogenase complex subunit D</fullName>
    </alternativeName>
    <alternativeName>
        <fullName>Succinate-ubiquinone oxidoreductase cytochrome b small subunit</fullName>
    </alternativeName>
    <alternativeName>
        <fullName>Succinate-ubiquinone reductase membrane anchor subunit</fullName>
    </alternativeName>
</protein>
<accession>A5GZW8</accession>
<accession>A7E1T4</accession>
<accession>A7E1T8</accession>
<dbReference type="EMBL" id="DQ486897">
    <property type="protein sequence ID" value="ABF29393.1"/>
    <property type="molecule type" value="mRNA"/>
</dbReference>
<dbReference type="EMBL" id="AY682832">
    <property type="protein sequence ID" value="AAW29970.1"/>
    <property type="molecule type" value="mRNA"/>
</dbReference>
<dbReference type="EMBL" id="AY682219">
    <property type="protein sequence ID" value="AAW30631.1"/>
    <property type="molecule type" value="mRNA"/>
</dbReference>
<dbReference type="EMBL" id="AY682222">
    <property type="protein sequence ID" value="AAW30633.1"/>
    <property type="molecule type" value="mRNA"/>
</dbReference>
<dbReference type="RefSeq" id="NP_001090985.1">
    <property type="nucleotide sequence ID" value="NM_001097516.1"/>
</dbReference>
<dbReference type="PDB" id="1ZOY">
    <property type="method" value="X-ray"/>
    <property type="resolution" value="2.40 A"/>
    <property type="chains" value="D=57-159"/>
</dbReference>
<dbReference type="PDB" id="1ZP0">
    <property type="method" value="X-ray"/>
    <property type="resolution" value="3.50 A"/>
    <property type="chains" value="D=57-159"/>
</dbReference>
<dbReference type="PDB" id="3ABV">
    <property type="method" value="X-ray"/>
    <property type="resolution" value="3.24 A"/>
    <property type="chains" value="D=57-159"/>
</dbReference>
<dbReference type="PDB" id="3AE1">
    <property type="method" value="X-ray"/>
    <property type="resolution" value="3.14 A"/>
    <property type="chains" value="D=57-159"/>
</dbReference>
<dbReference type="PDB" id="3AE2">
    <property type="method" value="X-ray"/>
    <property type="resolution" value="3.10 A"/>
    <property type="chains" value="D=57-159"/>
</dbReference>
<dbReference type="PDB" id="3AE3">
    <property type="method" value="X-ray"/>
    <property type="resolution" value="3.35 A"/>
    <property type="chains" value="D=57-159"/>
</dbReference>
<dbReference type="PDB" id="3AE4">
    <property type="method" value="X-ray"/>
    <property type="resolution" value="2.91 A"/>
    <property type="chains" value="D=57-159"/>
</dbReference>
<dbReference type="PDB" id="3AE5">
    <property type="method" value="X-ray"/>
    <property type="resolution" value="3.41 A"/>
    <property type="chains" value="D=57-159"/>
</dbReference>
<dbReference type="PDB" id="3AE6">
    <property type="method" value="X-ray"/>
    <property type="resolution" value="3.40 A"/>
    <property type="chains" value="D=57-159"/>
</dbReference>
<dbReference type="PDB" id="3AE7">
    <property type="method" value="X-ray"/>
    <property type="resolution" value="3.62 A"/>
    <property type="chains" value="D=57-159"/>
</dbReference>
<dbReference type="PDB" id="3AE8">
    <property type="method" value="X-ray"/>
    <property type="resolution" value="3.40 A"/>
    <property type="chains" value="D=57-159"/>
</dbReference>
<dbReference type="PDB" id="3AE9">
    <property type="method" value="X-ray"/>
    <property type="resolution" value="3.31 A"/>
    <property type="chains" value="D=57-159"/>
</dbReference>
<dbReference type="PDB" id="3AEA">
    <property type="method" value="X-ray"/>
    <property type="resolution" value="3.39 A"/>
    <property type="chains" value="D=57-159"/>
</dbReference>
<dbReference type="PDB" id="3AEB">
    <property type="method" value="X-ray"/>
    <property type="resolution" value="3.00 A"/>
    <property type="chains" value="D=57-159"/>
</dbReference>
<dbReference type="PDB" id="3AEC">
    <property type="method" value="X-ray"/>
    <property type="resolution" value="3.61 A"/>
    <property type="chains" value="D=57-159"/>
</dbReference>
<dbReference type="PDB" id="3AED">
    <property type="method" value="X-ray"/>
    <property type="resolution" value="3.52 A"/>
    <property type="chains" value="D=57-159"/>
</dbReference>
<dbReference type="PDB" id="3AEE">
    <property type="method" value="X-ray"/>
    <property type="resolution" value="3.22 A"/>
    <property type="chains" value="D=57-159"/>
</dbReference>
<dbReference type="PDB" id="3AEF">
    <property type="method" value="X-ray"/>
    <property type="resolution" value="2.80 A"/>
    <property type="chains" value="D=57-159"/>
</dbReference>
<dbReference type="PDB" id="3AEG">
    <property type="method" value="X-ray"/>
    <property type="resolution" value="3.27 A"/>
    <property type="chains" value="D=57-159"/>
</dbReference>
<dbReference type="PDB" id="3SFD">
    <property type="method" value="X-ray"/>
    <property type="resolution" value="2.61 A"/>
    <property type="chains" value="D=57-159"/>
</dbReference>
<dbReference type="PDB" id="3SFE">
    <property type="method" value="X-ray"/>
    <property type="resolution" value="2.81 A"/>
    <property type="chains" value="D=57-159"/>
</dbReference>
<dbReference type="PDB" id="4YTP">
    <property type="method" value="X-ray"/>
    <property type="resolution" value="3.10 A"/>
    <property type="chains" value="D=1-159"/>
</dbReference>
<dbReference type="PDB" id="4YXD">
    <property type="method" value="X-ray"/>
    <property type="resolution" value="3.00 A"/>
    <property type="chains" value="D=1-159"/>
</dbReference>
<dbReference type="PDBsum" id="1ZOY"/>
<dbReference type="PDBsum" id="1ZP0"/>
<dbReference type="PDBsum" id="3ABV"/>
<dbReference type="PDBsum" id="3AE1"/>
<dbReference type="PDBsum" id="3AE2"/>
<dbReference type="PDBsum" id="3AE3"/>
<dbReference type="PDBsum" id="3AE4"/>
<dbReference type="PDBsum" id="3AE5"/>
<dbReference type="PDBsum" id="3AE6"/>
<dbReference type="PDBsum" id="3AE7"/>
<dbReference type="PDBsum" id="3AE8"/>
<dbReference type="PDBsum" id="3AE9"/>
<dbReference type="PDBsum" id="3AEA"/>
<dbReference type="PDBsum" id="3AEB"/>
<dbReference type="PDBsum" id="3AEC"/>
<dbReference type="PDBsum" id="3AED"/>
<dbReference type="PDBsum" id="3AEE"/>
<dbReference type="PDBsum" id="3AEF"/>
<dbReference type="PDBsum" id="3AEG"/>
<dbReference type="PDBsum" id="3SFD"/>
<dbReference type="PDBsum" id="3SFE"/>
<dbReference type="PDBsum" id="4YTP"/>
<dbReference type="PDBsum" id="4YXD"/>
<dbReference type="SMR" id="A5GZW8"/>
<dbReference type="FunCoup" id="A5GZW8">
    <property type="interactions" value="1261"/>
</dbReference>
<dbReference type="STRING" id="9823.ENSSSCP00000015958"/>
<dbReference type="BindingDB" id="A5GZW8"/>
<dbReference type="ChEMBL" id="CHEMBL2366564"/>
<dbReference type="PaxDb" id="9823-ENSSSCP00000015958"/>
<dbReference type="PeptideAtlas" id="A5GZW8"/>
<dbReference type="GeneID" id="100048954"/>
<dbReference type="KEGG" id="ssc:100048954"/>
<dbReference type="CTD" id="6392"/>
<dbReference type="eggNOG" id="KOG4097">
    <property type="taxonomic scope" value="Eukaryota"/>
</dbReference>
<dbReference type="InParanoid" id="A5GZW8"/>
<dbReference type="OrthoDB" id="18577at2759"/>
<dbReference type="UniPathway" id="UPA00223"/>
<dbReference type="EvolutionaryTrace" id="A5GZW8"/>
<dbReference type="Proteomes" id="UP000008227">
    <property type="component" value="Unplaced"/>
</dbReference>
<dbReference type="Proteomes" id="UP000314985">
    <property type="component" value="Unplaced"/>
</dbReference>
<dbReference type="Proteomes" id="UP000694570">
    <property type="component" value="Unplaced"/>
</dbReference>
<dbReference type="Proteomes" id="UP000694571">
    <property type="component" value="Unplaced"/>
</dbReference>
<dbReference type="Proteomes" id="UP000694720">
    <property type="component" value="Unplaced"/>
</dbReference>
<dbReference type="Proteomes" id="UP000694722">
    <property type="component" value="Unplaced"/>
</dbReference>
<dbReference type="Proteomes" id="UP000694723">
    <property type="component" value="Unplaced"/>
</dbReference>
<dbReference type="Proteomes" id="UP000694724">
    <property type="component" value="Unplaced"/>
</dbReference>
<dbReference type="Proteomes" id="UP000694725">
    <property type="component" value="Unplaced"/>
</dbReference>
<dbReference type="Proteomes" id="UP000694726">
    <property type="component" value="Unplaced"/>
</dbReference>
<dbReference type="Proteomes" id="UP000694727">
    <property type="component" value="Unplaced"/>
</dbReference>
<dbReference type="Proteomes" id="UP000694728">
    <property type="component" value="Unplaced"/>
</dbReference>
<dbReference type="GO" id="GO:0005743">
    <property type="term" value="C:mitochondrial inner membrane"/>
    <property type="evidence" value="ECO:0000314"/>
    <property type="project" value="UniProtKB"/>
</dbReference>
<dbReference type="GO" id="GO:0045273">
    <property type="term" value="C:respiratory chain complex II (succinate dehydrogenase)"/>
    <property type="evidence" value="ECO:0000314"/>
    <property type="project" value="UniProtKB"/>
</dbReference>
<dbReference type="GO" id="GO:0020037">
    <property type="term" value="F:heme binding"/>
    <property type="evidence" value="ECO:0000314"/>
    <property type="project" value="UniProtKB"/>
</dbReference>
<dbReference type="GO" id="GO:0046872">
    <property type="term" value="F:metal ion binding"/>
    <property type="evidence" value="ECO:0007669"/>
    <property type="project" value="UniProtKB-KW"/>
</dbReference>
<dbReference type="GO" id="GO:0043495">
    <property type="term" value="F:protein-membrane adaptor activity"/>
    <property type="evidence" value="ECO:0000314"/>
    <property type="project" value="FlyBase"/>
</dbReference>
<dbReference type="GO" id="GO:0048039">
    <property type="term" value="F:ubiquinone binding"/>
    <property type="evidence" value="ECO:0000314"/>
    <property type="project" value="UniProtKB"/>
</dbReference>
<dbReference type="GO" id="GO:0006121">
    <property type="term" value="P:mitochondrial electron transport, succinate to ubiquinone"/>
    <property type="evidence" value="ECO:0000318"/>
    <property type="project" value="GO_Central"/>
</dbReference>
<dbReference type="GO" id="GO:0006099">
    <property type="term" value="P:tricarboxylic acid cycle"/>
    <property type="evidence" value="ECO:0000318"/>
    <property type="project" value="GO_Central"/>
</dbReference>
<dbReference type="CDD" id="cd03496">
    <property type="entry name" value="SQR_TypeC_CybS"/>
    <property type="match status" value="1"/>
</dbReference>
<dbReference type="FunFam" id="1.20.1300.10:FF:000009">
    <property type="entry name" value="Succinate dehydrogenase [ubiquinone] cytochrome b small subunit, mitochondrial"/>
    <property type="match status" value="1"/>
</dbReference>
<dbReference type="Gene3D" id="1.20.1300.10">
    <property type="entry name" value="Fumarate reductase/succinate dehydrogenase, transmembrane subunit"/>
    <property type="match status" value="1"/>
</dbReference>
<dbReference type="InterPro" id="IPR007992">
    <property type="entry name" value="CybS"/>
</dbReference>
<dbReference type="InterPro" id="IPR034804">
    <property type="entry name" value="SQR/QFR_C/D"/>
</dbReference>
<dbReference type="PANTHER" id="PTHR13337">
    <property type="entry name" value="SUCCINATE DEHYDROGENASE"/>
    <property type="match status" value="1"/>
</dbReference>
<dbReference type="PANTHER" id="PTHR13337:SF2">
    <property type="entry name" value="SUCCINATE DEHYDROGENASE [UBIQUINONE] CYTOCHROME B SMALL SUBUNIT, MITOCHONDRIAL"/>
    <property type="match status" value="1"/>
</dbReference>
<dbReference type="Pfam" id="PF05328">
    <property type="entry name" value="CybS"/>
    <property type="match status" value="1"/>
</dbReference>
<keyword id="KW-0002">3D-structure</keyword>
<keyword id="KW-0249">Electron transport</keyword>
<keyword id="KW-0349">Heme</keyword>
<keyword id="KW-0408">Iron</keyword>
<keyword id="KW-0472">Membrane</keyword>
<keyword id="KW-0479">Metal-binding</keyword>
<keyword id="KW-0496">Mitochondrion</keyword>
<keyword id="KW-0999">Mitochondrion inner membrane</keyword>
<keyword id="KW-1185">Reference proteome</keyword>
<keyword id="KW-0809">Transit peptide</keyword>
<keyword id="KW-0812">Transmembrane</keyword>
<keyword id="KW-1133">Transmembrane helix</keyword>
<keyword id="KW-0813">Transport</keyword>
<keyword id="KW-0816">Tricarboxylic acid cycle</keyword>
<organism>
    <name type="scientific">Sus scrofa</name>
    <name type="common">Pig</name>
    <dbReference type="NCBI Taxonomy" id="9823"/>
    <lineage>
        <taxon>Eukaryota</taxon>
        <taxon>Metazoa</taxon>
        <taxon>Chordata</taxon>
        <taxon>Craniata</taxon>
        <taxon>Vertebrata</taxon>
        <taxon>Euteleostomi</taxon>
        <taxon>Mammalia</taxon>
        <taxon>Eutheria</taxon>
        <taxon>Laurasiatheria</taxon>
        <taxon>Artiodactyla</taxon>
        <taxon>Suina</taxon>
        <taxon>Suidae</taxon>
        <taxon>Sus</taxon>
    </lineage>
</organism>
<feature type="transit peptide" description="Mitochondrion" evidence="3">
    <location>
        <begin position="1"/>
        <end position="36"/>
    </location>
</feature>
<feature type="chain" id="PRO_0000343804" description="Succinate dehydrogenase [ubiquinone] cytochrome b small subunit, mitochondrial">
    <location>
        <begin position="37"/>
        <end position="159"/>
    </location>
</feature>
<feature type="topological domain" description="Mitochondrial matrix" evidence="6">
    <location>
        <begin position="37"/>
        <end position="63"/>
    </location>
</feature>
<feature type="transmembrane region" description="Helical" evidence="6">
    <location>
        <begin position="64"/>
        <end position="85"/>
    </location>
</feature>
<feature type="topological domain" description="Mitochondrial intermembrane" evidence="6">
    <location>
        <begin position="86"/>
        <end position="90"/>
    </location>
</feature>
<feature type="transmembrane region" description="Helical" evidence="6">
    <location>
        <begin position="91"/>
        <end position="111"/>
    </location>
</feature>
<feature type="topological domain" description="Mitochondrial matrix" evidence="6">
    <location>
        <begin position="112"/>
        <end position="120"/>
    </location>
</feature>
<feature type="transmembrane region" description="Helical" evidence="6">
    <location>
        <begin position="121"/>
        <end position="142"/>
    </location>
</feature>
<feature type="topological domain" description="Mitochondrial intermembrane" evidence="6">
    <location>
        <begin position="143"/>
        <end position="159"/>
    </location>
</feature>
<feature type="binding site" description="axial binding residue" evidence="4 7 8">
    <location>
        <position position="102"/>
    </location>
    <ligand>
        <name>heme b</name>
        <dbReference type="ChEBI" id="CHEBI:60344"/>
        <note>ligand shared with SDHC</note>
    </ligand>
    <ligandPart>
        <name>Fe</name>
        <dbReference type="ChEBI" id="CHEBI:18248"/>
    </ligandPart>
</feature>
<feature type="binding site" evidence="4">
    <location>
        <position position="114"/>
    </location>
    <ligand>
        <name>a ubiquinone</name>
        <dbReference type="ChEBI" id="CHEBI:16389"/>
        <note>ligand shared with IP/SDHB</note>
    </ligand>
</feature>
<feature type="sequence conflict" description="In Ref. 1; AAW29970 and 2; ABF29393." evidence="5" ref="1 2">
    <original>V</original>
    <variation>A</variation>
    <location>
        <position position="123"/>
    </location>
</feature>
<feature type="helix" evidence="9">
    <location>
        <begin position="61"/>
        <end position="85"/>
    </location>
</feature>
<feature type="helix" evidence="9">
    <location>
        <begin position="89"/>
        <end position="114"/>
    </location>
</feature>
<feature type="helix" evidence="9">
    <location>
        <begin position="118"/>
        <end position="144"/>
    </location>
</feature>
<feature type="strand" evidence="9">
    <location>
        <begin position="145"/>
        <end position="147"/>
    </location>
</feature>
<feature type="helix" evidence="9">
    <location>
        <begin position="149"/>
        <end position="157"/>
    </location>
</feature>
<sequence>MATLWRLSVLCGARGGGALVLRTSVVRPAHVSAFLQDRHTPGWCGVQHIHLSPSHQASSKAASLHWTGERVVSVLLLGLLPAAYLNPCSAMDYSLAAALTLHGHWGIGQVVTDYVRGDALQKVAKAGLLALSAFTFAGLCYFNYHDVGICKAVAMLWKL</sequence>
<evidence type="ECO:0000250" key="1">
    <source>
        <dbReference type="UniProtKB" id="O14521"/>
    </source>
</evidence>
<evidence type="ECO:0000250" key="2">
    <source>
        <dbReference type="UniProtKB" id="Q95123"/>
    </source>
</evidence>
<evidence type="ECO:0000255" key="3"/>
<evidence type="ECO:0000269" key="4">
    <source>
    </source>
</evidence>
<evidence type="ECO:0000305" key="5"/>
<evidence type="ECO:0000305" key="6">
    <source>
    </source>
</evidence>
<evidence type="ECO:0007744" key="7">
    <source>
        <dbReference type="PDB" id="1ZOY"/>
    </source>
</evidence>
<evidence type="ECO:0007744" key="8">
    <source>
        <dbReference type="PDB" id="1ZP0"/>
    </source>
</evidence>
<evidence type="ECO:0007829" key="9">
    <source>
        <dbReference type="PDB" id="1ZOY"/>
    </source>
</evidence>
<gene>
    <name type="primary">SDHD</name>
</gene>
<proteinExistence type="evidence at protein level"/>
<name>DHSD_PIG</name>
<reference key="1">
    <citation type="journal article" date="2007" name="J. Anim. Breed. Genet.">
        <title>SNP discovery, expression and association analysis for the SDHD gene in pigs.</title>
        <authorList>
            <person name="Guimaraes S.E.F."/>
            <person name="Rothschild M.F."/>
            <person name="Ciobanu D."/>
            <person name="Stahl C.H."/>
            <person name="Lonergan S.M."/>
        </authorList>
    </citation>
    <scope>NUCLEOTIDE SEQUENCE [MRNA]</scope>
    <source>
        <tissue>Longissimus dorsi muscle</tissue>
    </source>
</reference>
<reference key="2">
    <citation type="submission" date="2004-07" db="EMBL/GenBank/DDBJ databases">
        <title>Molecular cloning, characterizations and expression profiles of porcine CAV3 gene.</title>
        <authorList>
            <person name="Zhu Z."/>
            <person name="Li K."/>
            <person name="Zhao S."/>
        </authorList>
    </citation>
    <scope>NUCLEOTIDE SEQUENCE [MRNA]</scope>
    <source>
        <tissue>Longissimus dorsi muscle</tissue>
    </source>
</reference>
<reference evidence="7 8" key="3">
    <citation type="journal article" date="2005" name="Cell">
        <title>Crystal structure of mitochondrial respiratory membrane protein complex II.</title>
        <authorList>
            <person name="Sun F."/>
            <person name="Huo X."/>
            <person name="Zhai Y."/>
            <person name="Wang A."/>
            <person name="Xu J."/>
            <person name="Su D."/>
            <person name="Bartlam M."/>
            <person name="Rao Z."/>
        </authorList>
    </citation>
    <scope>X-RAY CRYSTALLOGRAPHY (2.4 ANGSTROMS) OF 57-159 IN COMPLEXES WITH HEME AND UBIQUINONE</scope>
    <scope>FUNCTION</scope>
    <scope>PATHWAY</scope>
    <scope>SUBUNIT</scope>
</reference>